<proteinExistence type="evidence at protein level"/>
<accession>P85942</accession>
<organism>
    <name type="scientific">Pseudotsuga menziesii</name>
    <name type="common">Douglas-fir</name>
    <name type="synonym">Abies menziesii</name>
    <dbReference type="NCBI Taxonomy" id="3357"/>
    <lineage>
        <taxon>Eukaryota</taxon>
        <taxon>Viridiplantae</taxon>
        <taxon>Streptophyta</taxon>
        <taxon>Embryophyta</taxon>
        <taxon>Tracheophyta</taxon>
        <taxon>Spermatophyta</taxon>
        <taxon>Pinopsida</taxon>
        <taxon>Pinidae</taxon>
        <taxon>Conifers I</taxon>
        <taxon>Pinales</taxon>
        <taxon>Pinaceae</taxon>
        <taxon>Pseudotsuga</taxon>
    </lineage>
</organism>
<feature type="chain" id="PRO_0000347317" description="14-3-3-like protein 4">
    <location>
        <begin position="1" status="less than"/>
        <end position="28" status="greater than"/>
    </location>
</feature>
<feature type="non-consecutive residues" evidence="3">
    <location>
        <begin position="18"/>
        <end position="19"/>
    </location>
</feature>
<feature type="non-terminal residue" evidence="3">
    <location>
        <position position="1"/>
    </location>
</feature>
<feature type="non-terminal residue" evidence="3">
    <location>
        <position position="28"/>
    </location>
</feature>
<dbReference type="InterPro" id="IPR036815">
    <property type="entry name" value="14-3-3_dom_sf"/>
</dbReference>
<dbReference type="SUPFAM" id="SSF48445">
    <property type="entry name" value="14-3-3 protein"/>
    <property type="match status" value="1"/>
</dbReference>
<name>14334_PSEMZ</name>
<sequence>LDVELTVEERNLLSVGYKDSTLIMQLLR</sequence>
<evidence type="ECO:0000250" key="1">
    <source>
        <dbReference type="UniProtKB" id="Q96453"/>
    </source>
</evidence>
<evidence type="ECO:0000255" key="2"/>
<evidence type="ECO:0000303" key="3">
    <source>
    </source>
</evidence>
<comment type="similarity">
    <text evidence="2">Belongs to the 14-3-3 family.</text>
</comment>
<protein>
    <recommendedName>
        <fullName evidence="1">14-3-3-like protein 4</fullName>
    </recommendedName>
</protein>
<reference key="1">
    <citation type="journal article" date="2008" name="J. Proteomics">
        <title>A proteomics approach to identify proteins differentially expressed in Douglas-fir seedlings infected by Phellinus sulphurascens.</title>
        <authorList>
            <person name="Islam M.A."/>
            <person name="Sturrock R.N."/>
            <person name="Ekramoddoullah A.K.M."/>
        </authorList>
    </citation>
    <scope>IDENTIFICATION BY MASS SPECTROMETRY</scope>
</reference>